<organism>
    <name type="scientific">Xanthomonas campestris pv. campestris (strain ATCC 33913 / DSM 3586 / NCPPB 528 / LMG 568 / P 25)</name>
    <dbReference type="NCBI Taxonomy" id="190485"/>
    <lineage>
        <taxon>Bacteria</taxon>
        <taxon>Pseudomonadati</taxon>
        <taxon>Pseudomonadota</taxon>
        <taxon>Gammaproteobacteria</taxon>
        <taxon>Lysobacterales</taxon>
        <taxon>Lysobacteraceae</taxon>
        <taxon>Xanthomonas</taxon>
    </lineage>
</organism>
<protein>
    <recommendedName>
        <fullName>Phosphohexose mutases</fullName>
    </recommendedName>
    <domain>
        <recommendedName>
            <fullName>Phosphoglucomutase</fullName>
            <shortName>PGM</shortName>
            <ecNumber>5.4.2.2</ecNumber>
        </recommendedName>
        <alternativeName>
            <fullName>Glucose phosphomutase</fullName>
        </alternativeName>
    </domain>
    <domain>
        <recommendedName>
            <fullName>Phosphomannomutase</fullName>
            <shortName>PMM</shortName>
            <ecNumber>5.4.2.8</ecNumber>
        </recommendedName>
    </domain>
</protein>
<gene>
    <name type="primary">xanA</name>
    <name type="ordered locus">XCC0626</name>
</gene>
<reference key="1">
    <citation type="journal article" date="2002" name="Nature">
        <title>Comparison of the genomes of two Xanthomonas pathogens with differing host specificities.</title>
        <authorList>
            <person name="da Silva A.C.R."/>
            <person name="Ferro J.A."/>
            <person name="Reinach F.C."/>
            <person name="Farah C.S."/>
            <person name="Furlan L.R."/>
            <person name="Quaggio R.B."/>
            <person name="Monteiro-Vitorello C.B."/>
            <person name="Van Sluys M.A."/>
            <person name="Almeida N.F. Jr."/>
            <person name="Alves L.M.C."/>
            <person name="do Amaral A.M."/>
            <person name="Bertolini M.C."/>
            <person name="Camargo L.E.A."/>
            <person name="Camarotte G."/>
            <person name="Cannavan F."/>
            <person name="Cardozo J."/>
            <person name="Chambergo F."/>
            <person name="Ciapina L.P."/>
            <person name="Cicarelli R.M.B."/>
            <person name="Coutinho L.L."/>
            <person name="Cursino-Santos J.R."/>
            <person name="El-Dorry H."/>
            <person name="Faria J.B."/>
            <person name="Ferreira A.J.S."/>
            <person name="Ferreira R.C.C."/>
            <person name="Ferro M.I.T."/>
            <person name="Formighieri E.F."/>
            <person name="Franco M.C."/>
            <person name="Greggio C.C."/>
            <person name="Gruber A."/>
            <person name="Katsuyama A.M."/>
            <person name="Kishi L.T."/>
            <person name="Leite R.P."/>
            <person name="Lemos E.G.M."/>
            <person name="Lemos M.V.F."/>
            <person name="Locali E.C."/>
            <person name="Machado M.A."/>
            <person name="Madeira A.M.B.N."/>
            <person name="Martinez-Rossi N.M."/>
            <person name="Martins E.C."/>
            <person name="Meidanis J."/>
            <person name="Menck C.F.M."/>
            <person name="Miyaki C.Y."/>
            <person name="Moon D.H."/>
            <person name="Moreira L.M."/>
            <person name="Novo M.T.M."/>
            <person name="Okura V.K."/>
            <person name="Oliveira M.C."/>
            <person name="Oliveira V.R."/>
            <person name="Pereira H.A."/>
            <person name="Rossi A."/>
            <person name="Sena J.A.D."/>
            <person name="Silva C."/>
            <person name="de Souza R.F."/>
            <person name="Spinola L.A.F."/>
            <person name="Takita M.A."/>
            <person name="Tamura R.E."/>
            <person name="Teixeira E.C."/>
            <person name="Tezza R.I.D."/>
            <person name="Trindade dos Santos M."/>
            <person name="Truffi D."/>
            <person name="Tsai S.M."/>
            <person name="White F.F."/>
            <person name="Setubal J.C."/>
            <person name="Kitajima J.P."/>
        </authorList>
    </citation>
    <scope>NUCLEOTIDE SEQUENCE [LARGE SCALE GENOMIC DNA]</scope>
    <source>
        <strain>ATCC 33913 / DSM 3586 / NCPPB 528 / LMG 568 / P 25</strain>
    </source>
</reference>
<accession>P0C7J2</accession>
<accession>P29955</accession>
<sequence length="448" mass="48891">MTLPAFKAYDIRGRVPDELNEDLARRIGVALAAQLDQGPVVLGHDVRLASPALQEALSAGLRASGREVIDIGLCGTEEVYFQTDHLKAAGGVMVTASHNPMDYNGMKLVREQARPISSDTGLFAIRDTVAADTAAAGEPTAAEHSRTDKTAYLEHLLSYVDRSTLKPLKLVVNAGNGGAGLIVDLLAPHLPFEFVRVFHEPDGNFPNGIPNPLLPENRDATAKAVKEHGADFGIAWDGDFDRCFFFDHTGRFIEGYYLVGLLAQAILAKQPGGKVVHDPRLTWNTVEMVEDAGGIPVLCKSGHAFIKEKMRSENAVYGGEMSAHHYFREFAYADSGMIPWLLIAELVSQSGRSLADLVEARMQKFPCSGEINFKVDDAKAAVARVMAHYGDQSPELDYTDGISADFGQWRFNLRSSNTEPLLRLNVETRGDAALLETRTQEISNLLRG</sequence>
<comment type="function">
    <text evidence="1">Involved in xanthan production.</text>
</comment>
<comment type="catalytic activity">
    <reaction>
        <text>alpha-D-glucose 1-phosphate = alpha-D-glucose 6-phosphate</text>
        <dbReference type="Rhea" id="RHEA:23536"/>
        <dbReference type="ChEBI" id="CHEBI:58225"/>
        <dbReference type="ChEBI" id="CHEBI:58601"/>
        <dbReference type="EC" id="5.4.2.2"/>
    </reaction>
</comment>
<comment type="catalytic activity">
    <reaction>
        <text>alpha-D-mannose 1-phosphate = D-mannose 6-phosphate</text>
        <dbReference type="Rhea" id="RHEA:11140"/>
        <dbReference type="ChEBI" id="CHEBI:58409"/>
        <dbReference type="ChEBI" id="CHEBI:58735"/>
        <dbReference type="EC" id="5.4.2.8"/>
    </reaction>
</comment>
<comment type="cofactor">
    <cofactor evidence="1">
        <name>Mg(2+)</name>
        <dbReference type="ChEBI" id="CHEBI:18420"/>
    </cofactor>
    <text evidence="1">Binds 1 Mg(2+) ion per subunit.</text>
</comment>
<comment type="pathway">
    <text>Nucleotide-sugar biosynthesis; GDP-alpha-D-mannose biosynthesis; alpha-D-mannose 1-phosphate from D-fructose 6-phosphate: step 2/2.</text>
</comment>
<comment type="similarity">
    <text evidence="2">Belongs to the phosphohexose mutase family.</text>
</comment>
<comment type="sequence caution" evidence="2">
    <conflict type="erroneous initiation">
        <sequence resource="EMBL-CDS" id="AAM39942"/>
    </conflict>
</comment>
<feature type="chain" id="PRO_0000147817" description="Phosphohexose mutases">
    <location>
        <begin position="1"/>
        <end position="448"/>
    </location>
</feature>
<feature type="active site" description="Phosphoserine intermediate" evidence="1">
    <location>
        <position position="97"/>
    </location>
</feature>
<feature type="binding site" description="via phosphate group" evidence="1">
    <location>
        <position position="97"/>
    </location>
    <ligand>
        <name>Mg(2+)</name>
        <dbReference type="ChEBI" id="CHEBI:18420"/>
    </ligand>
</feature>
<feature type="binding site" evidence="1">
    <location>
        <position position="237"/>
    </location>
    <ligand>
        <name>Mg(2+)</name>
        <dbReference type="ChEBI" id="CHEBI:18420"/>
    </ligand>
</feature>
<feature type="binding site" evidence="1">
    <location>
        <position position="239"/>
    </location>
    <ligand>
        <name>Mg(2+)</name>
        <dbReference type="ChEBI" id="CHEBI:18420"/>
    </ligand>
</feature>
<feature type="binding site" evidence="1">
    <location>
        <position position="241"/>
    </location>
    <ligand>
        <name>Mg(2+)</name>
        <dbReference type="ChEBI" id="CHEBI:18420"/>
    </ligand>
</feature>
<proteinExistence type="inferred from homology"/>
<evidence type="ECO:0000250" key="1"/>
<evidence type="ECO:0000305" key="2"/>
<name>XANA_XANCP</name>
<keyword id="KW-0270">Exopolysaccharide synthesis</keyword>
<keyword id="KW-0413">Isomerase</keyword>
<keyword id="KW-0448">Lipopolysaccharide biosynthesis</keyword>
<keyword id="KW-0460">Magnesium</keyword>
<keyword id="KW-0479">Metal-binding</keyword>
<keyword id="KW-0597">Phosphoprotein</keyword>
<keyword id="KW-1185">Reference proteome</keyword>
<dbReference type="EC" id="5.4.2.2"/>
<dbReference type="EC" id="5.4.2.8"/>
<dbReference type="EMBL" id="AE008922">
    <property type="protein sequence ID" value="AAM39942.1"/>
    <property type="status" value="ALT_INIT"/>
    <property type="molecule type" value="Genomic_DNA"/>
</dbReference>
<dbReference type="RefSeq" id="NP_636018.1">
    <property type="nucleotide sequence ID" value="NC_003902.1"/>
</dbReference>
<dbReference type="RefSeq" id="WP_014506571.1">
    <property type="nucleotide sequence ID" value="NC_003902.1"/>
</dbReference>
<dbReference type="SMR" id="P0C7J2"/>
<dbReference type="STRING" id="190485.XCC0626"/>
<dbReference type="EnsemblBacteria" id="AAM39942">
    <property type="protein sequence ID" value="AAM39942"/>
    <property type="gene ID" value="XCC0626"/>
</dbReference>
<dbReference type="KEGG" id="xcc:XCC0626"/>
<dbReference type="PATRIC" id="fig|190485.4.peg.687"/>
<dbReference type="eggNOG" id="COG1109">
    <property type="taxonomic scope" value="Bacteria"/>
</dbReference>
<dbReference type="HOGENOM" id="CLU_016950_9_2_6"/>
<dbReference type="OrthoDB" id="9803322at2"/>
<dbReference type="UniPathway" id="UPA00126">
    <property type="reaction ID" value="UER00424"/>
</dbReference>
<dbReference type="Proteomes" id="UP000001010">
    <property type="component" value="Chromosome"/>
</dbReference>
<dbReference type="GO" id="GO:0000287">
    <property type="term" value="F:magnesium ion binding"/>
    <property type="evidence" value="ECO:0007669"/>
    <property type="project" value="InterPro"/>
</dbReference>
<dbReference type="GO" id="GO:0004614">
    <property type="term" value="F:phosphoglucomutase activity"/>
    <property type="evidence" value="ECO:0007669"/>
    <property type="project" value="UniProtKB-EC"/>
</dbReference>
<dbReference type="GO" id="GO:0004615">
    <property type="term" value="F:phosphomannomutase activity"/>
    <property type="evidence" value="ECO:0007669"/>
    <property type="project" value="UniProtKB-EC"/>
</dbReference>
<dbReference type="GO" id="GO:0009298">
    <property type="term" value="P:GDP-mannose biosynthetic process"/>
    <property type="evidence" value="ECO:0007669"/>
    <property type="project" value="UniProtKB-UniPathway"/>
</dbReference>
<dbReference type="GO" id="GO:0009103">
    <property type="term" value="P:lipopolysaccharide biosynthetic process"/>
    <property type="evidence" value="ECO:0007669"/>
    <property type="project" value="UniProtKB-KW"/>
</dbReference>
<dbReference type="CDD" id="cd03089">
    <property type="entry name" value="PMM_PGM"/>
    <property type="match status" value="1"/>
</dbReference>
<dbReference type="Gene3D" id="3.40.120.10">
    <property type="entry name" value="Alpha-D-Glucose-1,6-Bisphosphate, subunit A, domain 3"/>
    <property type="match status" value="3"/>
</dbReference>
<dbReference type="Gene3D" id="3.30.310.50">
    <property type="entry name" value="Alpha-D-phosphohexomutase, C-terminal domain"/>
    <property type="match status" value="1"/>
</dbReference>
<dbReference type="InterPro" id="IPR005844">
    <property type="entry name" value="A-D-PHexomutase_a/b/a-I"/>
</dbReference>
<dbReference type="InterPro" id="IPR016055">
    <property type="entry name" value="A-D-PHexomutase_a/b/a-I/II/III"/>
</dbReference>
<dbReference type="InterPro" id="IPR005845">
    <property type="entry name" value="A-D-PHexomutase_a/b/a-II"/>
</dbReference>
<dbReference type="InterPro" id="IPR005846">
    <property type="entry name" value="A-D-PHexomutase_a/b/a-III"/>
</dbReference>
<dbReference type="InterPro" id="IPR005843">
    <property type="entry name" value="A-D-PHexomutase_C"/>
</dbReference>
<dbReference type="InterPro" id="IPR036900">
    <property type="entry name" value="A-D-PHexomutase_C_sf"/>
</dbReference>
<dbReference type="InterPro" id="IPR016066">
    <property type="entry name" value="A-D-PHexomutase_CS"/>
</dbReference>
<dbReference type="InterPro" id="IPR005841">
    <property type="entry name" value="Alpha-D-phosphohexomutase_SF"/>
</dbReference>
<dbReference type="PANTHER" id="PTHR43771">
    <property type="entry name" value="PHOSPHOMANNOMUTASE"/>
    <property type="match status" value="1"/>
</dbReference>
<dbReference type="PANTHER" id="PTHR43771:SF1">
    <property type="entry name" value="PHOSPHOMANNOMUTASE"/>
    <property type="match status" value="1"/>
</dbReference>
<dbReference type="Pfam" id="PF02878">
    <property type="entry name" value="PGM_PMM_I"/>
    <property type="match status" value="1"/>
</dbReference>
<dbReference type="Pfam" id="PF02879">
    <property type="entry name" value="PGM_PMM_II"/>
    <property type="match status" value="1"/>
</dbReference>
<dbReference type="Pfam" id="PF02880">
    <property type="entry name" value="PGM_PMM_III"/>
    <property type="match status" value="1"/>
</dbReference>
<dbReference type="Pfam" id="PF00408">
    <property type="entry name" value="PGM_PMM_IV"/>
    <property type="match status" value="1"/>
</dbReference>
<dbReference type="PRINTS" id="PR00509">
    <property type="entry name" value="PGMPMM"/>
</dbReference>
<dbReference type="SUPFAM" id="SSF55957">
    <property type="entry name" value="Phosphoglucomutase, C-terminal domain"/>
    <property type="match status" value="1"/>
</dbReference>
<dbReference type="SUPFAM" id="SSF53738">
    <property type="entry name" value="Phosphoglucomutase, first 3 domains"/>
    <property type="match status" value="3"/>
</dbReference>
<dbReference type="PROSITE" id="PS00710">
    <property type="entry name" value="PGM_PMM"/>
    <property type="match status" value="1"/>
</dbReference>